<keyword id="KW-0266">Ethylene biosynthesis</keyword>
<keyword id="KW-0292">Fruit ripening</keyword>
<keyword id="KW-0456">Lyase</keyword>
<keyword id="KW-0663">Pyridoxal phosphate</keyword>
<keyword id="KW-1185">Reference proteome</keyword>
<keyword id="KW-0949">S-adenosyl-L-methionine</keyword>
<feature type="chain" id="PRO_0000291463" description="1-aminocyclopropane-1-carboxylate synthase 1">
    <location>
        <begin position="1"/>
        <end position="487"/>
    </location>
</feature>
<feature type="modified residue" description="N6-(pyridoxal phosphate)lysine" evidence="1">
    <location>
        <position position="286"/>
    </location>
</feature>
<feature type="sequence conflict" description="In Ref. 1; AAA33887." evidence="3" ref="1">
    <original>T</original>
    <variation>N</variation>
    <location>
        <position position="129"/>
    </location>
</feature>
<feature type="sequence conflict" description="In Ref. 1; AAA33887." evidence="3" ref="1">
    <original>L</original>
    <variation>F</variation>
    <location>
        <position position="151"/>
    </location>
</feature>
<feature type="sequence conflict" description="In Ref. 1; AAA33887." evidence="3" ref="1">
    <original>D</original>
    <variation>G</variation>
    <location>
        <position position="273"/>
    </location>
</feature>
<dbReference type="EC" id="4.4.1.14"/>
<dbReference type="EMBL" id="M96672">
    <property type="protein sequence ID" value="AAA33887.1"/>
    <property type="molecule type" value="mRNA"/>
</dbReference>
<dbReference type="EMBL" id="M96673">
    <property type="protein sequence ID" value="AAA33888.1"/>
    <property type="molecule type" value="Genomic_DNA"/>
</dbReference>
<dbReference type="EMBL" id="CM000128">
    <property type="protein sequence ID" value="EAY91722.1"/>
    <property type="molecule type" value="Genomic_DNA"/>
</dbReference>
<dbReference type="PIR" id="A47729">
    <property type="entry name" value="A47729"/>
</dbReference>
<dbReference type="PIR" id="B46376">
    <property type="entry name" value="B46376"/>
</dbReference>
<dbReference type="SMR" id="A2XLL2"/>
<dbReference type="STRING" id="39946.A2XLL2"/>
<dbReference type="HOGENOM" id="CLU_017584_1_0_1"/>
<dbReference type="UniPathway" id="UPA00384">
    <property type="reaction ID" value="UER00562"/>
</dbReference>
<dbReference type="Proteomes" id="UP000007015">
    <property type="component" value="Chromosome 3"/>
</dbReference>
<dbReference type="GO" id="GO:0016847">
    <property type="term" value="F:1-aminocyclopropane-1-carboxylate synthase activity"/>
    <property type="evidence" value="ECO:0007669"/>
    <property type="project" value="UniProtKB-EC"/>
</dbReference>
<dbReference type="GO" id="GO:0030170">
    <property type="term" value="F:pyridoxal phosphate binding"/>
    <property type="evidence" value="ECO:0007669"/>
    <property type="project" value="InterPro"/>
</dbReference>
<dbReference type="GO" id="GO:0008483">
    <property type="term" value="F:transaminase activity"/>
    <property type="evidence" value="ECO:0007669"/>
    <property type="project" value="TreeGrafter"/>
</dbReference>
<dbReference type="GO" id="GO:0009693">
    <property type="term" value="P:ethylene biosynthetic process"/>
    <property type="evidence" value="ECO:0007669"/>
    <property type="project" value="UniProtKB-UniPathway"/>
</dbReference>
<dbReference type="GO" id="GO:0009835">
    <property type="term" value="P:fruit ripening"/>
    <property type="evidence" value="ECO:0007669"/>
    <property type="project" value="UniProtKB-KW"/>
</dbReference>
<dbReference type="CDD" id="cd00609">
    <property type="entry name" value="AAT_like"/>
    <property type="match status" value="1"/>
</dbReference>
<dbReference type="Gene3D" id="3.90.1150.10">
    <property type="entry name" value="Aspartate Aminotransferase, domain 1"/>
    <property type="match status" value="1"/>
</dbReference>
<dbReference type="Gene3D" id="3.40.640.10">
    <property type="entry name" value="Type I PLP-dependent aspartate aminotransferase-like (Major domain)"/>
    <property type="match status" value="1"/>
</dbReference>
<dbReference type="InterPro" id="IPR004839">
    <property type="entry name" value="Aminotransferase_I/II_large"/>
</dbReference>
<dbReference type="InterPro" id="IPR050478">
    <property type="entry name" value="Ethylene_sulfur-biosynth"/>
</dbReference>
<dbReference type="InterPro" id="IPR004838">
    <property type="entry name" value="NHTrfase_class1_PyrdxlP-BS"/>
</dbReference>
<dbReference type="InterPro" id="IPR015424">
    <property type="entry name" value="PyrdxlP-dep_Trfase"/>
</dbReference>
<dbReference type="InterPro" id="IPR015421">
    <property type="entry name" value="PyrdxlP-dep_Trfase_major"/>
</dbReference>
<dbReference type="InterPro" id="IPR015422">
    <property type="entry name" value="PyrdxlP-dep_Trfase_small"/>
</dbReference>
<dbReference type="PANTHER" id="PTHR43795:SF10">
    <property type="entry name" value="1-AMINOCYCLOPROPANE-1-CARBOXYLATE SYNTHASE 9"/>
    <property type="match status" value="1"/>
</dbReference>
<dbReference type="PANTHER" id="PTHR43795">
    <property type="entry name" value="BIFUNCTIONAL ASPARTATE AMINOTRANSFERASE AND GLUTAMATE/ASPARTATE-PREPHENATE AMINOTRANSFERASE-RELATED"/>
    <property type="match status" value="1"/>
</dbReference>
<dbReference type="Pfam" id="PF00155">
    <property type="entry name" value="Aminotran_1_2"/>
    <property type="match status" value="1"/>
</dbReference>
<dbReference type="PRINTS" id="PR00753">
    <property type="entry name" value="ACCSYNTHASE"/>
</dbReference>
<dbReference type="SUPFAM" id="SSF53383">
    <property type="entry name" value="PLP-dependent transferases"/>
    <property type="match status" value="1"/>
</dbReference>
<dbReference type="PROSITE" id="PS00105">
    <property type="entry name" value="AA_TRANSFER_CLASS_1"/>
    <property type="match status" value="1"/>
</dbReference>
<proteinExistence type="evidence at transcript level"/>
<reference key="1">
    <citation type="journal article" date="1993" name="Mol. Biol. Cell">
        <title>Anaerobiosis and plant growth hormones induce two genes encoding 1-aminocyclopropane-1-carboxylate synthase in rice (Oryza sativa L.).</title>
        <authorList>
            <person name="Zarembinski T.I."/>
            <person name="Theologis A."/>
        </authorList>
    </citation>
    <scope>NUCLEOTIDE SEQUENCE [GENOMIC DNA / MRNA]</scope>
    <scope>INDUCTION</scope>
    <source>
        <strain>cv. IR36</strain>
    </source>
</reference>
<reference key="2">
    <citation type="journal article" date="2005" name="PLoS Biol.">
        <title>The genomes of Oryza sativa: a history of duplications.</title>
        <authorList>
            <person name="Yu J."/>
            <person name="Wang J."/>
            <person name="Lin W."/>
            <person name="Li S."/>
            <person name="Li H."/>
            <person name="Zhou J."/>
            <person name="Ni P."/>
            <person name="Dong W."/>
            <person name="Hu S."/>
            <person name="Zeng C."/>
            <person name="Zhang J."/>
            <person name="Zhang Y."/>
            <person name="Li R."/>
            <person name="Xu Z."/>
            <person name="Li S."/>
            <person name="Li X."/>
            <person name="Zheng H."/>
            <person name="Cong L."/>
            <person name="Lin L."/>
            <person name="Yin J."/>
            <person name="Geng J."/>
            <person name="Li G."/>
            <person name="Shi J."/>
            <person name="Liu J."/>
            <person name="Lv H."/>
            <person name="Li J."/>
            <person name="Wang J."/>
            <person name="Deng Y."/>
            <person name="Ran L."/>
            <person name="Shi X."/>
            <person name="Wang X."/>
            <person name="Wu Q."/>
            <person name="Li C."/>
            <person name="Ren X."/>
            <person name="Wang J."/>
            <person name="Wang X."/>
            <person name="Li D."/>
            <person name="Liu D."/>
            <person name="Zhang X."/>
            <person name="Ji Z."/>
            <person name="Zhao W."/>
            <person name="Sun Y."/>
            <person name="Zhang Z."/>
            <person name="Bao J."/>
            <person name="Han Y."/>
            <person name="Dong L."/>
            <person name="Ji J."/>
            <person name="Chen P."/>
            <person name="Wu S."/>
            <person name="Liu J."/>
            <person name="Xiao Y."/>
            <person name="Bu D."/>
            <person name="Tan J."/>
            <person name="Yang L."/>
            <person name="Ye C."/>
            <person name="Zhang J."/>
            <person name="Xu J."/>
            <person name="Zhou Y."/>
            <person name="Yu Y."/>
            <person name="Zhang B."/>
            <person name="Zhuang S."/>
            <person name="Wei H."/>
            <person name="Liu B."/>
            <person name="Lei M."/>
            <person name="Yu H."/>
            <person name="Li Y."/>
            <person name="Xu H."/>
            <person name="Wei S."/>
            <person name="He X."/>
            <person name="Fang L."/>
            <person name="Zhang Z."/>
            <person name="Zhang Y."/>
            <person name="Huang X."/>
            <person name="Su Z."/>
            <person name="Tong W."/>
            <person name="Li J."/>
            <person name="Tong Z."/>
            <person name="Li S."/>
            <person name="Ye J."/>
            <person name="Wang L."/>
            <person name="Fang L."/>
            <person name="Lei T."/>
            <person name="Chen C.-S."/>
            <person name="Chen H.-C."/>
            <person name="Xu Z."/>
            <person name="Li H."/>
            <person name="Huang H."/>
            <person name="Zhang F."/>
            <person name="Xu H."/>
            <person name="Li N."/>
            <person name="Zhao C."/>
            <person name="Li S."/>
            <person name="Dong L."/>
            <person name="Huang Y."/>
            <person name="Li L."/>
            <person name="Xi Y."/>
            <person name="Qi Q."/>
            <person name="Li W."/>
            <person name="Zhang B."/>
            <person name="Hu W."/>
            <person name="Zhang Y."/>
            <person name="Tian X."/>
            <person name="Jiao Y."/>
            <person name="Liang X."/>
            <person name="Jin J."/>
            <person name="Gao L."/>
            <person name="Zheng W."/>
            <person name="Hao B."/>
            <person name="Liu S.-M."/>
            <person name="Wang W."/>
            <person name="Yuan L."/>
            <person name="Cao M."/>
            <person name="McDermott J."/>
            <person name="Samudrala R."/>
            <person name="Wang J."/>
            <person name="Wong G.K.-S."/>
            <person name="Yang H."/>
        </authorList>
    </citation>
    <scope>NUCLEOTIDE SEQUENCE [LARGE SCALE GENOMIC DNA]</scope>
    <source>
        <strain>cv. 93-11</strain>
    </source>
</reference>
<reference key="3">
    <citation type="journal article" date="1992" name="Proc. Natl. Acad. Sci. U.S.A.">
        <title>The 1-aminocyclopropane-1-carboxylate synthase gene family of Arabidopsis thaliana.</title>
        <authorList>
            <person name="Liang X.-W."/>
            <person name="Abel S."/>
            <person name="Keller J.A."/>
            <person name="Shen N.F."/>
            <person name="Theologis A."/>
        </authorList>
    </citation>
    <scope>NUCLEOTIDE SEQUENCE [MRNA] OF 53-99</scope>
</reference>
<comment type="function">
    <text>Catalyzes the formation of 1-aminocyclopropane-1-carboxylate, a direct precursor of ethylene in higher plants.</text>
</comment>
<comment type="catalytic activity">
    <reaction>
        <text>S-adenosyl-L-methionine = 1-aminocyclopropane-1-carboxylate + S-methyl-5'-thioadenosine + H(+)</text>
        <dbReference type="Rhea" id="RHEA:21744"/>
        <dbReference type="ChEBI" id="CHEBI:15378"/>
        <dbReference type="ChEBI" id="CHEBI:17509"/>
        <dbReference type="ChEBI" id="CHEBI:58360"/>
        <dbReference type="ChEBI" id="CHEBI:59789"/>
        <dbReference type="EC" id="4.4.1.14"/>
    </reaction>
</comment>
<comment type="cofactor">
    <cofactor>
        <name>pyridoxal 5'-phosphate</name>
        <dbReference type="ChEBI" id="CHEBI:597326"/>
    </cofactor>
</comment>
<comment type="pathway">
    <text>Alkene biosynthesis; ethylene biosynthesis via S-adenosyl-L-methionine; ethylene from S-adenosyl-L-methionine: step 1/2.</text>
</comment>
<comment type="subunit">
    <text>Homodimer.</text>
</comment>
<comment type="induction">
    <text evidence="2">By anaerobiosis and indoleacetic acid (IAA) + benzyladenine (BA) + LiCl treatment.</text>
</comment>
<comment type="similarity">
    <text evidence="3">Belongs to the class-I pyridoxal-phosphate-dependent aminotransferase family.</text>
</comment>
<protein>
    <recommendedName>
        <fullName>1-aminocyclopropane-1-carboxylate synthase 1</fullName>
        <shortName>ACC synthase 1</shortName>
        <ecNumber>4.4.1.14</ecNumber>
    </recommendedName>
    <alternativeName>
        <fullName>S-adenosyl-L-methionine methylthioadenosine-lyase 1</fullName>
    </alternativeName>
</protein>
<organism>
    <name type="scientific">Oryza sativa subsp. indica</name>
    <name type="common">Rice</name>
    <dbReference type="NCBI Taxonomy" id="39946"/>
    <lineage>
        <taxon>Eukaryota</taxon>
        <taxon>Viridiplantae</taxon>
        <taxon>Streptophyta</taxon>
        <taxon>Embryophyta</taxon>
        <taxon>Tracheophyta</taxon>
        <taxon>Spermatophyta</taxon>
        <taxon>Magnoliopsida</taxon>
        <taxon>Liliopsida</taxon>
        <taxon>Poales</taxon>
        <taxon>Poaceae</taxon>
        <taxon>BOP clade</taxon>
        <taxon>Oryzoideae</taxon>
        <taxon>Oryzeae</taxon>
        <taxon>Oryzinae</taxon>
        <taxon>Oryza</taxon>
        <taxon>Oryza sativa</taxon>
    </lineage>
</organism>
<name>1A11_ORYSI</name>
<evidence type="ECO:0000250" key="1"/>
<evidence type="ECO:0000269" key="2">
    <source>
    </source>
</evidence>
<evidence type="ECO:0000305" key="3"/>
<sequence length="487" mass="53139">MVSQVVAEEKPQLLSKKAGCNSHGQDSSYFLGWQEYEKNPFDPVSNPSGIIQMGLAENQLSFDLLEEWLEKNPHALGLRREGGGASVFRELALFQDYHGLPAFKNALARFMSEQRGYKVVFDPSNIVLTAGATSANEALMFCLADHGDAFLIPTPYYPGFDRDLKWRTGAEIVPVHCASANGFRVTRPALDDAYRRAQKRRLRVKGVLITNPSNPLGTASPRADLETIVDFVAAKGIHLISDEIYAGTAFAEPPAGFVSALEVVAGRDGGGADVSDRVHVVYSLSKDLGLPGFRVGAIYSANAAVVSAATKMSSFGLVSSQTQYLLAALLGDRDFTRSYVAENKRRIKERHDQLVDGLREIGIGCLPSNAGLFCWVDMSHLMRSRSFAGEMELWKKVVFEVGLNISPGSSCHCREPGWFRVCFANMSAKTLDVAMQRLRSFVDSATGGGDNAALRRAAVPVRSVSCPLAIKWALRLTPSIADRKAER</sequence>
<gene>
    <name type="primary">ACC1</name>
    <name type="ORF">OsI_012955</name>
</gene>
<accession>A2XLL2</accession>
<accession>Q07215</accession>
<accession>Q6ATI2</accession>